<accession>P60791</accession>
<protein>
    <recommendedName>
        <fullName evidence="1">Elongation factor 4</fullName>
        <shortName evidence="1">EF-4</shortName>
        <ecNumber evidence="1">3.6.5.n1</ecNumber>
    </recommendedName>
    <alternativeName>
        <fullName evidence="1">Ribosomal back-translocase LepA</fullName>
    </alternativeName>
</protein>
<gene>
    <name evidence="1" type="primary">lepA</name>
    <name type="ordered locus">MAP_2217c</name>
</gene>
<comment type="function">
    <text evidence="1">Required for accurate and efficient protein synthesis under certain stress conditions. May act as a fidelity factor of the translation reaction, by catalyzing a one-codon backward translocation of tRNAs on improperly translocated ribosomes. Back-translocation proceeds from a post-translocation (POST) complex to a pre-translocation (PRE) complex, thus giving elongation factor G a second chance to translocate the tRNAs correctly. Binds to ribosomes in a GTP-dependent manner.</text>
</comment>
<comment type="catalytic activity">
    <reaction evidence="1">
        <text>GTP + H2O = GDP + phosphate + H(+)</text>
        <dbReference type="Rhea" id="RHEA:19669"/>
        <dbReference type="ChEBI" id="CHEBI:15377"/>
        <dbReference type="ChEBI" id="CHEBI:15378"/>
        <dbReference type="ChEBI" id="CHEBI:37565"/>
        <dbReference type="ChEBI" id="CHEBI:43474"/>
        <dbReference type="ChEBI" id="CHEBI:58189"/>
        <dbReference type="EC" id="3.6.5.n1"/>
    </reaction>
</comment>
<comment type="subcellular location">
    <subcellularLocation>
        <location evidence="1">Cell membrane</location>
        <topology evidence="1">Peripheral membrane protein</topology>
        <orientation evidence="1">Cytoplasmic side</orientation>
    </subcellularLocation>
</comment>
<comment type="similarity">
    <text evidence="1">Belongs to the TRAFAC class translation factor GTPase superfamily. Classic translation factor GTPase family. LepA subfamily.</text>
</comment>
<feature type="chain" id="PRO_0000176303" description="Elongation factor 4">
    <location>
        <begin position="1"/>
        <end position="660"/>
    </location>
</feature>
<feature type="domain" description="tr-type G">
    <location>
        <begin position="55"/>
        <end position="241"/>
    </location>
</feature>
<feature type="binding site" evidence="1">
    <location>
        <begin position="67"/>
        <end position="72"/>
    </location>
    <ligand>
        <name>GTP</name>
        <dbReference type="ChEBI" id="CHEBI:37565"/>
    </ligand>
</feature>
<feature type="binding site" evidence="1">
    <location>
        <begin position="188"/>
        <end position="191"/>
    </location>
    <ligand>
        <name>GTP</name>
        <dbReference type="ChEBI" id="CHEBI:37565"/>
    </ligand>
</feature>
<proteinExistence type="inferred from homology"/>
<dbReference type="EC" id="3.6.5.n1" evidence="1"/>
<dbReference type="EMBL" id="AE016958">
    <property type="protein sequence ID" value="AAS04534.1"/>
    <property type="molecule type" value="Genomic_DNA"/>
</dbReference>
<dbReference type="SMR" id="P60791"/>
<dbReference type="STRING" id="262316.MAP_2217c"/>
<dbReference type="KEGG" id="mpa:MAP_2217c"/>
<dbReference type="eggNOG" id="COG0481">
    <property type="taxonomic scope" value="Bacteria"/>
</dbReference>
<dbReference type="HOGENOM" id="CLU_009995_3_3_11"/>
<dbReference type="Proteomes" id="UP000000580">
    <property type="component" value="Chromosome"/>
</dbReference>
<dbReference type="GO" id="GO:0005886">
    <property type="term" value="C:plasma membrane"/>
    <property type="evidence" value="ECO:0007669"/>
    <property type="project" value="UniProtKB-SubCell"/>
</dbReference>
<dbReference type="GO" id="GO:0005525">
    <property type="term" value="F:GTP binding"/>
    <property type="evidence" value="ECO:0007669"/>
    <property type="project" value="UniProtKB-UniRule"/>
</dbReference>
<dbReference type="GO" id="GO:0003924">
    <property type="term" value="F:GTPase activity"/>
    <property type="evidence" value="ECO:0007669"/>
    <property type="project" value="UniProtKB-UniRule"/>
</dbReference>
<dbReference type="GO" id="GO:0043022">
    <property type="term" value="F:ribosome binding"/>
    <property type="evidence" value="ECO:0007669"/>
    <property type="project" value="UniProtKB-UniRule"/>
</dbReference>
<dbReference type="GO" id="GO:0003746">
    <property type="term" value="F:translation elongation factor activity"/>
    <property type="evidence" value="ECO:0007669"/>
    <property type="project" value="UniProtKB-UniRule"/>
</dbReference>
<dbReference type="GO" id="GO:0045727">
    <property type="term" value="P:positive regulation of translation"/>
    <property type="evidence" value="ECO:0007669"/>
    <property type="project" value="UniProtKB-UniRule"/>
</dbReference>
<dbReference type="CDD" id="cd03699">
    <property type="entry name" value="EF4_II"/>
    <property type="match status" value="1"/>
</dbReference>
<dbReference type="CDD" id="cd16260">
    <property type="entry name" value="EF4_III"/>
    <property type="match status" value="1"/>
</dbReference>
<dbReference type="CDD" id="cd01890">
    <property type="entry name" value="LepA"/>
    <property type="match status" value="1"/>
</dbReference>
<dbReference type="CDD" id="cd03709">
    <property type="entry name" value="lepA_C"/>
    <property type="match status" value="1"/>
</dbReference>
<dbReference type="FunFam" id="3.30.70.240:FF:000011">
    <property type="entry name" value="Elongation factor 4"/>
    <property type="match status" value="1"/>
</dbReference>
<dbReference type="FunFam" id="3.40.50.300:FF:000078">
    <property type="entry name" value="Elongation factor 4"/>
    <property type="match status" value="1"/>
</dbReference>
<dbReference type="FunFam" id="2.40.30.10:FF:000015">
    <property type="entry name" value="Translation factor GUF1, mitochondrial"/>
    <property type="match status" value="1"/>
</dbReference>
<dbReference type="FunFam" id="3.30.70.2570:FF:000001">
    <property type="entry name" value="Translation factor GUF1, mitochondrial"/>
    <property type="match status" value="1"/>
</dbReference>
<dbReference type="FunFam" id="3.30.70.870:FF:000004">
    <property type="entry name" value="Translation factor GUF1, mitochondrial"/>
    <property type="match status" value="1"/>
</dbReference>
<dbReference type="Gene3D" id="3.30.70.240">
    <property type="match status" value="1"/>
</dbReference>
<dbReference type="Gene3D" id="3.30.70.2570">
    <property type="entry name" value="Elongation factor 4, C-terminal domain"/>
    <property type="match status" value="1"/>
</dbReference>
<dbReference type="Gene3D" id="3.30.70.870">
    <property type="entry name" value="Elongation Factor G (Translational Gtpase), domain 3"/>
    <property type="match status" value="1"/>
</dbReference>
<dbReference type="Gene3D" id="3.40.50.300">
    <property type="entry name" value="P-loop containing nucleotide triphosphate hydrolases"/>
    <property type="match status" value="1"/>
</dbReference>
<dbReference type="Gene3D" id="2.40.30.10">
    <property type="entry name" value="Translation factors"/>
    <property type="match status" value="1"/>
</dbReference>
<dbReference type="HAMAP" id="MF_00071">
    <property type="entry name" value="LepA"/>
    <property type="match status" value="1"/>
</dbReference>
<dbReference type="InterPro" id="IPR006297">
    <property type="entry name" value="EF-4"/>
</dbReference>
<dbReference type="InterPro" id="IPR035647">
    <property type="entry name" value="EFG_III/V"/>
</dbReference>
<dbReference type="InterPro" id="IPR000640">
    <property type="entry name" value="EFG_V-like"/>
</dbReference>
<dbReference type="InterPro" id="IPR004161">
    <property type="entry name" value="EFTu-like_2"/>
</dbReference>
<dbReference type="InterPro" id="IPR031157">
    <property type="entry name" value="G_TR_CS"/>
</dbReference>
<dbReference type="InterPro" id="IPR038363">
    <property type="entry name" value="LepA_C_sf"/>
</dbReference>
<dbReference type="InterPro" id="IPR013842">
    <property type="entry name" value="LepA_CTD"/>
</dbReference>
<dbReference type="InterPro" id="IPR035654">
    <property type="entry name" value="LepA_IV"/>
</dbReference>
<dbReference type="InterPro" id="IPR027417">
    <property type="entry name" value="P-loop_NTPase"/>
</dbReference>
<dbReference type="InterPro" id="IPR005225">
    <property type="entry name" value="Small_GTP-bd"/>
</dbReference>
<dbReference type="InterPro" id="IPR000795">
    <property type="entry name" value="T_Tr_GTP-bd_dom"/>
</dbReference>
<dbReference type="InterPro" id="IPR009000">
    <property type="entry name" value="Transl_B-barrel_sf"/>
</dbReference>
<dbReference type="NCBIfam" id="TIGR01393">
    <property type="entry name" value="lepA"/>
    <property type="match status" value="1"/>
</dbReference>
<dbReference type="NCBIfam" id="TIGR00231">
    <property type="entry name" value="small_GTP"/>
    <property type="match status" value="1"/>
</dbReference>
<dbReference type="PANTHER" id="PTHR43512:SF4">
    <property type="entry name" value="TRANSLATION FACTOR GUF1 HOMOLOG, CHLOROPLASTIC"/>
    <property type="match status" value="1"/>
</dbReference>
<dbReference type="PANTHER" id="PTHR43512">
    <property type="entry name" value="TRANSLATION FACTOR GUF1-RELATED"/>
    <property type="match status" value="1"/>
</dbReference>
<dbReference type="Pfam" id="PF00679">
    <property type="entry name" value="EFG_C"/>
    <property type="match status" value="1"/>
</dbReference>
<dbReference type="Pfam" id="PF00009">
    <property type="entry name" value="GTP_EFTU"/>
    <property type="match status" value="1"/>
</dbReference>
<dbReference type="Pfam" id="PF03144">
    <property type="entry name" value="GTP_EFTU_D2"/>
    <property type="match status" value="1"/>
</dbReference>
<dbReference type="Pfam" id="PF06421">
    <property type="entry name" value="LepA_C"/>
    <property type="match status" value="1"/>
</dbReference>
<dbReference type="PRINTS" id="PR00315">
    <property type="entry name" value="ELONGATNFCT"/>
</dbReference>
<dbReference type="SMART" id="SM00838">
    <property type="entry name" value="EFG_C"/>
    <property type="match status" value="1"/>
</dbReference>
<dbReference type="SUPFAM" id="SSF54980">
    <property type="entry name" value="EF-G C-terminal domain-like"/>
    <property type="match status" value="2"/>
</dbReference>
<dbReference type="SUPFAM" id="SSF52540">
    <property type="entry name" value="P-loop containing nucleoside triphosphate hydrolases"/>
    <property type="match status" value="1"/>
</dbReference>
<dbReference type="SUPFAM" id="SSF50447">
    <property type="entry name" value="Translation proteins"/>
    <property type="match status" value="1"/>
</dbReference>
<dbReference type="PROSITE" id="PS00301">
    <property type="entry name" value="G_TR_1"/>
    <property type="match status" value="1"/>
</dbReference>
<dbReference type="PROSITE" id="PS51722">
    <property type="entry name" value="G_TR_2"/>
    <property type="match status" value="1"/>
</dbReference>
<keyword id="KW-1003">Cell membrane</keyword>
<keyword id="KW-0342">GTP-binding</keyword>
<keyword id="KW-0378">Hydrolase</keyword>
<keyword id="KW-0472">Membrane</keyword>
<keyword id="KW-0547">Nucleotide-binding</keyword>
<keyword id="KW-0648">Protein biosynthesis</keyword>
<keyword id="KW-1185">Reference proteome</keyword>
<sequence>MRLPAGRHIRSIDAPIVPQSGRADTLDTLANRRLAGPDQEIPISSFADKTFTAPAQIRNFCIIAHIDHGKSTLADRMLQLTGVVDERSMRAQYLDRMDIERERGITIKAQNVRLPWQVSGGEDAGKEFVLHLIDTPGHVDFTYEVSRALEACEGAVLLVDAAQGIEAQTLANLYLALDRDLTIIPVLNKIDLPAADPDRYAGELAHIIGCEPDDVLWVSGKTGEGVARLLDEVVRQVPPPQGQADAPLRAMIFDSVYDIYRGVVTYVRVVDGKITPRERIAMMSTGATHELLEVGIVSPEPKASDGLGVGEVGYLITGVKDVRQSKVGDTVTSARHGAQEALTGYREPKPMVYSGLYPVDGSDYPDLRDALDRLRLNDAALTYEPETSVALGCGFRCGFLGLLHMEITRERLEREFDLDLISTSPNVVYRVIKEDGTEIVVTNPSDWPEGKVRTVYEPVVKTTIIAPSEFIGTIMELCQSRRGELGGMDYLSPERVELRYTMPLGEIIFDFFDSLKSRTRGYASLDYEEAGEQEAQLVKVDILLQGEAVDAFSAIVHKDAAFAYGNKMTTKLKELIPRQQFEVPVQAAIGSKIIARENIRAIRKDVLSKCYGGDITRKRKLLEKQKEGKKRMKTIGRVDVPQEAFVAALSADAAGDKSKK</sequence>
<name>LEPA_MYCPA</name>
<evidence type="ECO:0000255" key="1">
    <source>
        <dbReference type="HAMAP-Rule" id="MF_00071"/>
    </source>
</evidence>
<reference key="1">
    <citation type="journal article" date="2005" name="Proc. Natl. Acad. Sci. U.S.A.">
        <title>The complete genome sequence of Mycobacterium avium subspecies paratuberculosis.</title>
        <authorList>
            <person name="Li L."/>
            <person name="Bannantine J.P."/>
            <person name="Zhang Q."/>
            <person name="Amonsin A."/>
            <person name="May B.J."/>
            <person name="Alt D."/>
            <person name="Banerji N."/>
            <person name="Kanjilal S."/>
            <person name="Kapur V."/>
        </authorList>
    </citation>
    <scope>NUCLEOTIDE SEQUENCE [LARGE SCALE GENOMIC DNA]</scope>
    <source>
        <strain>ATCC BAA-968 / K-10</strain>
    </source>
</reference>
<organism>
    <name type="scientific">Mycolicibacterium paratuberculosis (strain ATCC BAA-968 / K-10)</name>
    <name type="common">Mycobacterium paratuberculosis</name>
    <dbReference type="NCBI Taxonomy" id="262316"/>
    <lineage>
        <taxon>Bacteria</taxon>
        <taxon>Bacillati</taxon>
        <taxon>Actinomycetota</taxon>
        <taxon>Actinomycetes</taxon>
        <taxon>Mycobacteriales</taxon>
        <taxon>Mycobacteriaceae</taxon>
        <taxon>Mycobacterium</taxon>
        <taxon>Mycobacterium avium complex (MAC)</taxon>
    </lineage>
</organism>